<protein>
    <recommendedName>
        <fullName evidence="1">ATP-dependent Clp protease proteolytic subunit</fullName>
        <ecNumber evidence="1">3.4.21.92</ecNumber>
    </recommendedName>
    <alternativeName>
        <fullName evidence="1">Endopeptidase Clp</fullName>
    </alternativeName>
</protein>
<organism>
    <name type="scientific">Thermus thermophilus (strain ATCC BAA-163 / DSM 7039 / HB27)</name>
    <dbReference type="NCBI Taxonomy" id="262724"/>
    <lineage>
        <taxon>Bacteria</taxon>
        <taxon>Thermotogati</taxon>
        <taxon>Deinococcota</taxon>
        <taxon>Deinococci</taxon>
        <taxon>Thermales</taxon>
        <taxon>Thermaceae</taxon>
        <taxon>Thermus</taxon>
    </lineage>
</organism>
<keyword id="KW-0963">Cytoplasm</keyword>
<keyword id="KW-0378">Hydrolase</keyword>
<keyword id="KW-0645">Protease</keyword>
<keyword id="KW-0720">Serine protease</keyword>
<name>CLPP_THET2</name>
<sequence length="194" mass="21393">MVIPYVIEQTARGERVYDIYSRLLKDRIIFLGTPIDAQVANVVVAQLLFLDAQNPNQEIKLYINSPGGEVDAGLAIYDTMQFVRAPVSTIVIGMAASMAAVILAAGEKGRRYALPHAKVMIHQPWGGVRGTASDIAIQAQEILKAKKLLNEILAKHTGQPLEKVEKDTDRDYYLSAQEALEYGLIDQVVTREEA</sequence>
<evidence type="ECO:0000255" key="1">
    <source>
        <dbReference type="HAMAP-Rule" id="MF_00444"/>
    </source>
</evidence>
<evidence type="ECO:0000305" key="2"/>
<gene>
    <name evidence="1" type="primary">clpP</name>
    <name type="ordered locus">TT_C0250</name>
</gene>
<accession>Q72L15</accession>
<reference key="1">
    <citation type="journal article" date="2004" name="Nat. Biotechnol.">
        <title>The genome sequence of the extreme thermophile Thermus thermophilus.</title>
        <authorList>
            <person name="Henne A."/>
            <person name="Brueggemann H."/>
            <person name="Raasch C."/>
            <person name="Wiezer A."/>
            <person name="Hartsch T."/>
            <person name="Liesegang H."/>
            <person name="Johann A."/>
            <person name="Lienard T."/>
            <person name="Gohl O."/>
            <person name="Martinez-Arias R."/>
            <person name="Jacobi C."/>
            <person name="Starkuviene V."/>
            <person name="Schlenczeck S."/>
            <person name="Dencker S."/>
            <person name="Huber R."/>
            <person name="Klenk H.-P."/>
            <person name="Kramer W."/>
            <person name="Merkl R."/>
            <person name="Gottschalk G."/>
            <person name="Fritz H.-J."/>
        </authorList>
    </citation>
    <scope>NUCLEOTIDE SEQUENCE [LARGE SCALE GENOMIC DNA]</scope>
    <source>
        <strain>ATCC BAA-163 / DSM 7039 / HB27</strain>
    </source>
</reference>
<dbReference type="EC" id="3.4.21.92" evidence="1"/>
<dbReference type="EMBL" id="AE017221">
    <property type="protein sequence ID" value="AAS80598.1"/>
    <property type="status" value="ALT_INIT"/>
    <property type="molecule type" value="Genomic_DNA"/>
</dbReference>
<dbReference type="RefSeq" id="WP_008631995.1">
    <property type="nucleotide sequence ID" value="NC_005835.1"/>
</dbReference>
<dbReference type="SMR" id="Q72L15"/>
<dbReference type="MEROPS" id="S14.001"/>
<dbReference type="GeneID" id="3169324"/>
<dbReference type="KEGG" id="tth:TT_C0250"/>
<dbReference type="eggNOG" id="COG0740">
    <property type="taxonomic scope" value="Bacteria"/>
</dbReference>
<dbReference type="HOGENOM" id="CLU_058707_3_2_0"/>
<dbReference type="OrthoDB" id="9802800at2"/>
<dbReference type="Proteomes" id="UP000000592">
    <property type="component" value="Chromosome"/>
</dbReference>
<dbReference type="GO" id="GO:0005737">
    <property type="term" value="C:cytoplasm"/>
    <property type="evidence" value="ECO:0007669"/>
    <property type="project" value="UniProtKB-SubCell"/>
</dbReference>
<dbReference type="GO" id="GO:0009368">
    <property type="term" value="C:endopeptidase Clp complex"/>
    <property type="evidence" value="ECO:0007669"/>
    <property type="project" value="TreeGrafter"/>
</dbReference>
<dbReference type="GO" id="GO:0004176">
    <property type="term" value="F:ATP-dependent peptidase activity"/>
    <property type="evidence" value="ECO:0007669"/>
    <property type="project" value="InterPro"/>
</dbReference>
<dbReference type="GO" id="GO:0051117">
    <property type="term" value="F:ATPase binding"/>
    <property type="evidence" value="ECO:0007669"/>
    <property type="project" value="TreeGrafter"/>
</dbReference>
<dbReference type="GO" id="GO:0004252">
    <property type="term" value="F:serine-type endopeptidase activity"/>
    <property type="evidence" value="ECO:0007669"/>
    <property type="project" value="UniProtKB-UniRule"/>
</dbReference>
<dbReference type="GO" id="GO:0006515">
    <property type="term" value="P:protein quality control for misfolded or incompletely synthesized proteins"/>
    <property type="evidence" value="ECO:0007669"/>
    <property type="project" value="TreeGrafter"/>
</dbReference>
<dbReference type="CDD" id="cd07017">
    <property type="entry name" value="S14_ClpP_2"/>
    <property type="match status" value="1"/>
</dbReference>
<dbReference type="FunFam" id="3.90.226.10:FF:000001">
    <property type="entry name" value="ATP-dependent Clp protease proteolytic subunit"/>
    <property type="match status" value="1"/>
</dbReference>
<dbReference type="Gene3D" id="3.90.226.10">
    <property type="entry name" value="2-enoyl-CoA Hydratase, Chain A, domain 1"/>
    <property type="match status" value="1"/>
</dbReference>
<dbReference type="HAMAP" id="MF_00444">
    <property type="entry name" value="ClpP"/>
    <property type="match status" value="1"/>
</dbReference>
<dbReference type="InterPro" id="IPR001907">
    <property type="entry name" value="ClpP"/>
</dbReference>
<dbReference type="InterPro" id="IPR029045">
    <property type="entry name" value="ClpP/crotonase-like_dom_sf"/>
</dbReference>
<dbReference type="InterPro" id="IPR023562">
    <property type="entry name" value="ClpP/TepA"/>
</dbReference>
<dbReference type="InterPro" id="IPR033135">
    <property type="entry name" value="ClpP_His_AS"/>
</dbReference>
<dbReference type="InterPro" id="IPR018215">
    <property type="entry name" value="ClpP_Ser_AS"/>
</dbReference>
<dbReference type="NCBIfam" id="TIGR00493">
    <property type="entry name" value="clpP"/>
    <property type="match status" value="1"/>
</dbReference>
<dbReference type="NCBIfam" id="NF001368">
    <property type="entry name" value="PRK00277.1"/>
    <property type="match status" value="1"/>
</dbReference>
<dbReference type="NCBIfam" id="NF009205">
    <property type="entry name" value="PRK12553.1"/>
    <property type="match status" value="1"/>
</dbReference>
<dbReference type="PANTHER" id="PTHR10381">
    <property type="entry name" value="ATP-DEPENDENT CLP PROTEASE PROTEOLYTIC SUBUNIT"/>
    <property type="match status" value="1"/>
</dbReference>
<dbReference type="PANTHER" id="PTHR10381:SF70">
    <property type="entry name" value="ATP-DEPENDENT CLP PROTEASE PROTEOLYTIC SUBUNIT"/>
    <property type="match status" value="1"/>
</dbReference>
<dbReference type="Pfam" id="PF00574">
    <property type="entry name" value="CLP_protease"/>
    <property type="match status" value="1"/>
</dbReference>
<dbReference type="PRINTS" id="PR00127">
    <property type="entry name" value="CLPPROTEASEP"/>
</dbReference>
<dbReference type="SUPFAM" id="SSF52096">
    <property type="entry name" value="ClpP/crotonase"/>
    <property type="match status" value="1"/>
</dbReference>
<dbReference type="PROSITE" id="PS00382">
    <property type="entry name" value="CLP_PROTEASE_HIS"/>
    <property type="match status" value="1"/>
</dbReference>
<dbReference type="PROSITE" id="PS00381">
    <property type="entry name" value="CLP_PROTEASE_SER"/>
    <property type="match status" value="1"/>
</dbReference>
<comment type="function">
    <text evidence="1">Cleaves peptides in various proteins in a process that requires ATP hydrolysis. Has a chymotrypsin-like activity. Plays a major role in the degradation of misfolded proteins.</text>
</comment>
<comment type="catalytic activity">
    <reaction evidence="1">
        <text>Hydrolysis of proteins to small peptides in the presence of ATP and magnesium. alpha-casein is the usual test substrate. In the absence of ATP, only oligopeptides shorter than five residues are hydrolyzed (such as succinyl-Leu-Tyr-|-NHMec, and Leu-Tyr-Leu-|-Tyr-Trp, in which cleavage of the -Tyr-|-Leu- and -Tyr-|-Trp bonds also occurs).</text>
        <dbReference type="EC" id="3.4.21.92"/>
    </reaction>
</comment>
<comment type="subunit">
    <text evidence="1">Fourteen ClpP subunits assemble into 2 heptameric rings which stack back to back to give a disk-like structure with a central cavity, resembling the structure of eukaryotic proteasomes.</text>
</comment>
<comment type="subcellular location">
    <subcellularLocation>
        <location evidence="1">Cytoplasm</location>
    </subcellularLocation>
</comment>
<comment type="similarity">
    <text evidence="1">Belongs to the peptidase S14 family.</text>
</comment>
<comment type="sequence caution" evidence="2">
    <conflict type="erroneous initiation">
        <sequence resource="EMBL-CDS" id="AAS80598"/>
    </conflict>
</comment>
<feature type="chain" id="PRO_0000179699" description="ATP-dependent Clp protease proteolytic subunit">
    <location>
        <begin position="1"/>
        <end position="194"/>
    </location>
</feature>
<feature type="active site" description="Nucleophile" evidence="1">
    <location>
        <position position="97"/>
    </location>
</feature>
<feature type="active site" evidence="1">
    <location>
        <position position="122"/>
    </location>
</feature>
<proteinExistence type="inferred from homology"/>